<dbReference type="EC" id="2.6.1.37" evidence="1"/>
<dbReference type="EMBL" id="CP000001">
    <property type="protein sequence ID" value="AAU19030.1"/>
    <property type="molecule type" value="Genomic_DNA"/>
</dbReference>
<dbReference type="RefSeq" id="WP_000138250.1">
    <property type="nucleotide sequence ID" value="NC_006274.1"/>
</dbReference>
<dbReference type="SMR" id="Q63E45"/>
<dbReference type="KEGG" id="bcz:BCE33L1218"/>
<dbReference type="PATRIC" id="fig|288681.22.peg.4343"/>
<dbReference type="Proteomes" id="UP000002612">
    <property type="component" value="Chromosome"/>
</dbReference>
<dbReference type="GO" id="GO:0047304">
    <property type="term" value="F:2-aminoethylphosphonate-pyruvate transaminase activity"/>
    <property type="evidence" value="ECO:0007669"/>
    <property type="project" value="UniProtKB-UniRule"/>
</dbReference>
<dbReference type="GO" id="GO:0019700">
    <property type="term" value="P:organic phosphonate catabolic process"/>
    <property type="evidence" value="ECO:0007669"/>
    <property type="project" value="InterPro"/>
</dbReference>
<dbReference type="Gene3D" id="3.90.1150.10">
    <property type="entry name" value="Aspartate Aminotransferase, domain 1"/>
    <property type="match status" value="1"/>
</dbReference>
<dbReference type="Gene3D" id="3.40.640.10">
    <property type="entry name" value="Type I PLP-dependent aspartate aminotransferase-like (Major domain)"/>
    <property type="match status" value="1"/>
</dbReference>
<dbReference type="HAMAP" id="MF_01376">
    <property type="entry name" value="PhnW_aminotrans_5"/>
    <property type="match status" value="1"/>
</dbReference>
<dbReference type="InterPro" id="IPR000192">
    <property type="entry name" value="Aminotrans_V_dom"/>
</dbReference>
<dbReference type="InterPro" id="IPR012703">
    <property type="entry name" value="NH2EtPonate_pyrv_transaminase"/>
</dbReference>
<dbReference type="InterPro" id="IPR015424">
    <property type="entry name" value="PyrdxlP-dep_Trfase"/>
</dbReference>
<dbReference type="InterPro" id="IPR015421">
    <property type="entry name" value="PyrdxlP-dep_Trfase_major"/>
</dbReference>
<dbReference type="InterPro" id="IPR015422">
    <property type="entry name" value="PyrdxlP-dep_Trfase_small"/>
</dbReference>
<dbReference type="InterPro" id="IPR024169">
    <property type="entry name" value="SP_NH2Trfase/AEP_transaminase"/>
</dbReference>
<dbReference type="NCBIfam" id="TIGR03301">
    <property type="entry name" value="PhnW-AepZ"/>
    <property type="match status" value="1"/>
</dbReference>
<dbReference type="NCBIfam" id="NF010006">
    <property type="entry name" value="PRK13479.1"/>
    <property type="match status" value="1"/>
</dbReference>
<dbReference type="NCBIfam" id="TIGR02326">
    <property type="entry name" value="transamin_PhnW"/>
    <property type="match status" value="1"/>
</dbReference>
<dbReference type="PANTHER" id="PTHR42778">
    <property type="entry name" value="2-AMINOETHYLPHOSPHONATE--PYRUVATE TRANSAMINASE"/>
    <property type="match status" value="1"/>
</dbReference>
<dbReference type="PANTHER" id="PTHR42778:SF1">
    <property type="entry name" value="2-AMINOETHYLPHOSPHONATE--PYRUVATE TRANSAMINASE"/>
    <property type="match status" value="1"/>
</dbReference>
<dbReference type="Pfam" id="PF00266">
    <property type="entry name" value="Aminotran_5"/>
    <property type="match status" value="1"/>
</dbReference>
<dbReference type="PIRSF" id="PIRSF000524">
    <property type="entry name" value="SPT"/>
    <property type="match status" value="1"/>
</dbReference>
<dbReference type="SUPFAM" id="SSF53383">
    <property type="entry name" value="PLP-dependent transferases"/>
    <property type="match status" value="1"/>
</dbReference>
<accession>Q63E45</accession>
<evidence type="ECO:0000255" key="1">
    <source>
        <dbReference type="HAMAP-Rule" id="MF_01376"/>
    </source>
</evidence>
<reference key="1">
    <citation type="journal article" date="2006" name="J. Bacteriol.">
        <title>Pathogenomic sequence analysis of Bacillus cereus and Bacillus thuringiensis isolates closely related to Bacillus anthracis.</title>
        <authorList>
            <person name="Han C.S."/>
            <person name="Xie G."/>
            <person name="Challacombe J.F."/>
            <person name="Altherr M.R."/>
            <person name="Bhotika S.S."/>
            <person name="Bruce D."/>
            <person name="Campbell C.S."/>
            <person name="Campbell M.L."/>
            <person name="Chen J."/>
            <person name="Chertkov O."/>
            <person name="Cleland C."/>
            <person name="Dimitrijevic M."/>
            <person name="Doggett N.A."/>
            <person name="Fawcett J.J."/>
            <person name="Glavina T."/>
            <person name="Goodwin L.A."/>
            <person name="Hill K.K."/>
            <person name="Hitchcock P."/>
            <person name="Jackson P.J."/>
            <person name="Keim P."/>
            <person name="Kewalramani A.R."/>
            <person name="Longmire J."/>
            <person name="Lucas S."/>
            <person name="Malfatti S."/>
            <person name="McMurry K."/>
            <person name="Meincke L.J."/>
            <person name="Misra M."/>
            <person name="Moseman B.L."/>
            <person name="Mundt M."/>
            <person name="Munk A.C."/>
            <person name="Okinaka R.T."/>
            <person name="Parson-Quintana B."/>
            <person name="Reilly L.P."/>
            <person name="Richardson P."/>
            <person name="Robinson D.L."/>
            <person name="Rubin E."/>
            <person name="Saunders E."/>
            <person name="Tapia R."/>
            <person name="Tesmer J.G."/>
            <person name="Thayer N."/>
            <person name="Thompson L.S."/>
            <person name="Tice H."/>
            <person name="Ticknor L.O."/>
            <person name="Wills P.L."/>
            <person name="Brettin T.S."/>
            <person name="Gilna P."/>
        </authorList>
    </citation>
    <scope>NUCLEOTIDE SEQUENCE [LARGE SCALE GENOMIC DNA]</scope>
    <source>
        <strain>ZK / E33L</strain>
    </source>
</reference>
<proteinExistence type="inferred from homology"/>
<comment type="function">
    <text evidence="1">Involved in phosphonate degradation.</text>
</comment>
<comment type="catalytic activity">
    <reaction evidence="1">
        <text>(2-aminoethyl)phosphonate + pyruvate = phosphonoacetaldehyde + L-alanine</text>
        <dbReference type="Rhea" id="RHEA:17021"/>
        <dbReference type="ChEBI" id="CHEBI:15361"/>
        <dbReference type="ChEBI" id="CHEBI:57418"/>
        <dbReference type="ChEBI" id="CHEBI:57972"/>
        <dbReference type="ChEBI" id="CHEBI:58383"/>
        <dbReference type="EC" id="2.6.1.37"/>
    </reaction>
</comment>
<comment type="cofactor">
    <cofactor evidence="1">
        <name>pyridoxal 5'-phosphate</name>
        <dbReference type="ChEBI" id="CHEBI:597326"/>
    </cofactor>
</comment>
<comment type="subunit">
    <text evidence="1">Homodimer.</text>
</comment>
<comment type="similarity">
    <text evidence="1">Belongs to the class-V pyridoxal-phosphate-dependent aminotransferase family. PhnW subfamily.</text>
</comment>
<gene>
    <name evidence="1" type="primary">phnW</name>
    <name type="ordered locus">BCE33L1218</name>
</gene>
<name>PHNW_BACCZ</name>
<organism>
    <name type="scientific">Bacillus cereus (strain ZK / E33L)</name>
    <dbReference type="NCBI Taxonomy" id="288681"/>
    <lineage>
        <taxon>Bacteria</taxon>
        <taxon>Bacillati</taxon>
        <taxon>Bacillota</taxon>
        <taxon>Bacilli</taxon>
        <taxon>Bacillales</taxon>
        <taxon>Bacillaceae</taxon>
        <taxon>Bacillus</taxon>
        <taxon>Bacillus cereus group</taxon>
    </lineage>
</organism>
<protein>
    <recommendedName>
        <fullName evidence="1">2-aminoethylphosphonate--pyruvate transaminase</fullName>
        <ecNumber evidence="1">2.6.1.37</ecNumber>
    </recommendedName>
    <alternativeName>
        <fullName evidence="1">2-aminoethylphosphonate aminotransferase</fullName>
    </alternativeName>
    <alternativeName>
        <fullName evidence="1">AEP transaminase</fullName>
        <shortName evidence="1">AEPT</shortName>
    </alternativeName>
</protein>
<keyword id="KW-0032">Aminotransferase</keyword>
<keyword id="KW-0663">Pyridoxal phosphate</keyword>
<keyword id="KW-0670">Pyruvate</keyword>
<keyword id="KW-0808">Transferase</keyword>
<feature type="chain" id="PRO_0000286756" description="2-aminoethylphosphonate--pyruvate transaminase">
    <location>
        <begin position="1"/>
        <end position="365"/>
    </location>
</feature>
<feature type="modified residue" description="N6-(pyridoxal phosphate)lysine" evidence="1">
    <location>
        <position position="194"/>
    </location>
</feature>
<sequence>MTENHYLLLTPGPLTTTKTVKEVMLYDWCTWDVEYNTMVQKVRAKLVSLATKEEEKYTTVLMQGSGTFSVEAVIGSVIPKNGKLLVCTNGAYGKRIVQMAEMLHIDVVVSQTEEWEPTNIVEVEKILQQDKEITHIAVVHCETTTGIINPIVDVCKLGKQYGKVTLVDAMSSFGGIEIDIAELQIDFLISSANKCIQGVPGFGFVIAKRDELLKCKGQARSLSLDLYDQWETMENQNGKWRFTSPTHVVHAFYQALLELEKEGGVRARYNRYYNNQKLLVNRMGEIGFKPIVNEKYQSPIITSFIYPEGNFEFQQLYNELKRYGFVIYPGKISKVDTFRIGNIGDVHEEDINRLVDSIAKGVVIG</sequence>